<dbReference type="EC" id="2.2.1.6"/>
<dbReference type="EMBL" id="M75907">
    <property type="protein sequence ID" value="AAA26595.1"/>
    <property type="molecule type" value="Genomic_DNA"/>
</dbReference>
<dbReference type="PIR" id="B44857">
    <property type="entry name" value="B44857"/>
</dbReference>
<dbReference type="SMR" id="P27868"/>
<dbReference type="UniPathway" id="UPA00047">
    <property type="reaction ID" value="UER00055"/>
</dbReference>
<dbReference type="UniPathway" id="UPA00049">
    <property type="reaction ID" value="UER00059"/>
</dbReference>
<dbReference type="GO" id="GO:0005948">
    <property type="term" value="C:acetolactate synthase complex"/>
    <property type="evidence" value="ECO:0007669"/>
    <property type="project" value="TreeGrafter"/>
</dbReference>
<dbReference type="GO" id="GO:0003984">
    <property type="term" value="F:acetolactate synthase activity"/>
    <property type="evidence" value="ECO:0007669"/>
    <property type="project" value="UniProtKB-EC"/>
</dbReference>
<dbReference type="GO" id="GO:0050660">
    <property type="term" value="F:flavin adenine dinucleotide binding"/>
    <property type="evidence" value="ECO:0007669"/>
    <property type="project" value="InterPro"/>
</dbReference>
<dbReference type="GO" id="GO:0000287">
    <property type="term" value="F:magnesium ion binding"/>
    <property type="evidence" value="ECO:0007669"/>
    <property type="project" value="InterPro"/>
</dbReference>
<dbReference type="GO" id="GO:0030976">
    <property type="term" value="F:thiamine pyrophosphate binding"/>
    <property type="evidence" value="ECO:0007669"/>
    <property type="project" value="InterPro"/>
</dbReference>
<dbReference type="GO" id="GO:0009097">
    <property type="term" value="P:isoleucine biosynthetic process"/>
    <property type="evidence" value="ECO:0007669"/>
    <property type="project" value="UniProtKB-UniPathway"/>
</dbReference>
<dbReference type="GO" id="GO:0009099">
    <property type="term" value="P:L-valine biosynthetic process"/>
    <property type="evidence" value="ECO:0007669"/>
    <property type="project" value="UniProtKB-UniPathway"/>
</dbReference>
<dbReference type="CDD" id="cd02015">
    <property type="entry name" value="TPP_AHAS"/>
    <property type="match status" value="1"/>
</dbReference>
<dbReference type="CDD" id="cd07035">
    <property type="entry name" value="TPP_PYR_POX_like"/>
    <property type="match status" value="1"/>
</dbReference>
<dbReference type="FunFam" id="3.40.50.1220:FF:000008">
    <property type="entry name" value="Acetolactate synthase"/>
    <property type="match status" value="1"/>
</dbReference>
<dbReference type="FunFam" id="3.40.50.970:FF:000007">
    <property type="entry name" value="Acetolactate synthase"/>
    <property type="match status" value="1"/>
</dbReference>
<dbReference type="Gene3D" id="3.40.50.970">
    <property type="match status" value="2"/>
</dbReference>
<dbReference type="Gene3D" id="3.40.50.1220">
    <property type="entry name" value="TPP-binding domain"/>
    <property type="match status" value="1"/>
</dbReference>
<dbReference type="InterPro" id="IPR012846">
    <property type="entry name" value="Acetolactate_synth_lsu"/>
</dbReference>
<dbReference type="InterPro" id="IPR039368">
    <property type="entry name" value="AHAS_TPP"/>
</dbReference>
<dbReference type="InterPro" id="IPR029035">
    <property type="entry name" value="DHS-like_NAD/FAD-binding_dom"/>
</dbReference>
<dbReference type="InterPro" id="IPR029061">
    <property type="entry name" value="THDP-binding"/>
</dbReference>
<dbReference type="InterPro" id="IPR012000">
    <property type="entry name" value="Thiamin_PyroP_enz_cen_dom"/>
</dbReference>
<dbReference type="InterPro" id="IPR012001">
    <property type="entry name" value="Thiamin_PyroP_enz_TPP-bd_dom"/>
</dbReference>
<dbReference type="InterPro" id="IPR045229">
    <property type="entry name" value="TPP_enz"/>
</dbReference>
<dbReference type="InterPro" id="IPR011766">
    <property type="entry name" value="TPP_enzyme_TPP-bd"/>
</dbReference>
<dbReference type="NCBIfam" id="TIGR00118">
    <property type="entry name" value="acolac_lg"/>
    <property type="match status" value="1"/>
</dbReference>
<dbReference type="NCBIfam" id="NF005651">
    <property type="entry name" value="PRK07418.1"/>
    <property type="match status" value="1"/>
</dbReference>
<dbReference type="PANTHER" id="PTHR18968:SF13">
    <property type="entry name" value="ACETOLACTATE SYNTHASE CATALYTIC SUBUNIT, MITOCHONDRIAL"/>
    <property type="match status" value="1"/>
</dbReference>
<dbReference type="PANTHER" id="PTHR18968">
    <property type="entry name" value="THIAMINE PYROPHOSPHATE ENZYMES"/>
    <property type="match status" value="1"/>
</dbReference>
<dbReference type="Pfam" id="PF02775">
    <property type="entry name" value="TPP_enzyme_C"/>
    <property type="match status" value="1"/>
</dbReference>
<dbReference type="Pfam" id="PF00205">
    <property type="entry name" value="TPP_enzyme_M"/>
    <property type="match status" value="1"/>
</dbReference>
<dbReference type="Pfam" id="PF02776">
    <property type="entry name" value="TPP_enzyme_N"/>
    <property type="match status" value="1"/>
</dbReference>
<dbReference type="SUPFAM" id="SSF52467">
    <property type="entry name" value="DHS-like NAD/FAD-binding domain"/>
    <property type="match status" value="1"/>
</dbReference>
<dbReference type="SUPFAM" id="SSF52518">
    <property type="entry name" value="Thiamin diphosphate-binding fold (THDP-binding)"/>
    <property type="match status" value="2"/>
</dbReference>
<accession>P27868</accession>
<organism>
    <name type="scientific">Arthrospira platensis</name>
    <name type="common">Spirulina platensis</name>
    <dbReference type="NCBI Taxonomy" id="118562"/>
    <lineage>
        <taxon>Bacteria</taxon>
        <taxon>Bacillati</taxon>
        <taxon>Cyanobacteriota</taxon>
        <taxon>Cyanophyceae</taxon>
        <taxon>Oscillatoriophycideae</taxon>
        <taxon>Oscillatoriales</taxon>
        <taxon>Microcoleaceae</taxon>
        <taxon>Arthrospira</taxon>
    </lineage>
</organism>
<name>ILVB_ARTPT</name>
<reference key="1">
    <citation type="journal article" date="1992" name="J. Gen. Microbiol.">
        <title>Molecular characterization of the genes encoding acetohydroxy acid synthase in the cyanobacterium Spirulina platensis.</title>
        <authorList>
            <person name="Milano A."/>
            <person name="de Rossi E."/>
            <person name="Zanaria E."/>
            <person name="Barbierato L."/>
            <person name="Ciferri O."/>
            <person name="Riccardi G."/>
        </authorList>
    </citation>
    <scope>NUCLEOTIDE SEQUENCE [GENOMIC DNA]</scope>
</reference>
<gene>
    <name type="primary">ilvY</name>
</gene>
<protein>
    <recommendedName>
        <fullName>Acetolactate synthase</fullName>
        <ecNumber>2.2.1.6</ecNumber>
    </recommendedName>
    <alternativeName>
        <fullName>ALS</fullName>
    </alternativeName>
    <alternativeName>
        <fullName>Acetohydroxy-acid synthase</fullName>
    </alternativeName>
</protein>
<comment type="catalytic activity">
    <reaction>
        <text>2 pyruvate + H(+) = (2S)-2-acetolactate + CO2</text>
        <dbReference type="Rhea" id="RHEA:25249"/>
        <dbReference type="ChEBI" id="CHEBI:15361"/>
        <dbReference type="ChEBI" id="CHEBI:15378"/>
        <dbReference type="ChEBI" id="CHEBI:16526"/>
        <dbReference type="ChEBI" id="CHEBI:58476"/>
        <dbReference type="EC" id="2.2.1.6"/>
    </reaction>
</comment>
<comment type="cofactor">
    <cofactor evidence="1">
        <name>Mg(2+)</name>
        <dbReference type="ChEBI" id="CHEBI:18420"/>
    </cofactor>
    <text evidence="1">Binds 1 Mg(2+) ion per subunit.</text>
</comment>
<comment type="cofactor">
    <cofactor evidence="1">
        <name>thiamine diphosphate</name>
        <dbReference type="ChEBI" id="CHEBI:58937"/>
    </cofactor>
    <text evidence="1">Binds 1 thiamine pyrophosphate per subunit.</text>
</comment>
<comment type="pathway">
    <text>Amino-acid biosynthesis; L-isoleucine biosynthesis; L-isoleucine from 2-oxobutanoate: step 1/4.</text>
</comment>
<comment type="pathway">
    <text>Amino-acid biosynthesis; L-valine biosynthesis; L-valine from pyruvate: step 1/4.</text>
</comment>
<comment type="similarity">
    <text evidence="2">Belongs to the TPP enzyme family.</text>
</comment>
<feature type="chain" id="PRO_0000090813" description="Acetolactate synthase">
    <location>
        <begin position="1"/>
        <end position="579" status="greater than"/>
    </location>
</feature>
<feature type="region of interest" description="Thiamine pyrophosphate binding">
    <location>
        <begin position="408"/>
        <end position="487"/>
    </location>
</feature>
<feature type="binding site" evidence="1">
    <location>
        <position position="61"/>
    </location>
    <ligand>
        <name>thiamine diphosphate</name>
        <dbReference type="ChEBI" id="CHEBI:58937"/>
    </ligand>
</feature>
<feature type="binding site" evidence="1">
    <location>
        <position position="163"/>
    </location>
    <ligand>
        <name>FAD</name>
        <dbReference type="ChEBI" id="CHEBI:57692"/>
    </ligand>
</feature>
<feature type="binding site" evidence="1">
    <location>
        <begin position="274"/>
        <end position="295"/>
    </location>
    <ligand>
        <name>FAD</name>
        <dbReference type="ChEBI" id="CHEBI:57692"/>
    </ligand>
</feature>
<feature type="binding site" evidence="1">
    <location>
        <begin position="317"/>
        <end position="336"/>
    </location>
    <ligand>
        <name>FAD</name>
        <dbReference type="ChEBI" id="CHEBI:57692"/>
    </ligand>
</feature>
<feature type="binding site" evidence="1">
    <location>
        <position position="458"/>
    </location>
    <ligand>
        <name>Mg(2+)</name>
        <dbReference type="ChEBI" id="CHEBI:18420"/>
    </ligand>
</feature>
<feature type="binding site" evidence="1">
    <location>
        <position position="485"/>
    </location>
    <ligand>
        <name>Mg(2+)</name>
        <dbReference type="ChEBI" id="CHEBI:18420"/>
    </ligand>
</feature>
<feature type="non-terminal residue">
    <location>
        <position position="579"/>
    </location>
</feature>
<proteinExistence type="inferred from homology"/>
<sequence>MQDQKQAVKRVTGAFALIDSLRRHGVQHIFGYPGGSNLPIYDEIYRAEQAGEIKHYLVRHEQGAAHAADGYARSTGKVGVCLATSGPGATNLVTGLATAYLDSVPVLAITGQVPRSALGTDAFQEIDIFGITLPIVKHSYLVREPSELPRIVVEAFHLAMSGRPGPVLIDIPKDVGNAQIDYIPVEPGSVRRVGYRPTERGNPRQINQALQLISEATKPLLYVGGGAIMAGAHAEIAELSERFQIPVTSTLMGKGRFDENHPLSLGIVGMLGMHGTAYANFAVMELDFVIAVGVRFDDRVAGTGDQFAHSAKVIHIDIDPAEVGKNRSTDVPIVGDVRQVLGDMLQRTYHWERKLSRNKPRNGTDLNQLREPIPLTVPHPEDGISPQDGDWELSHQCPDAFYTTDVGQHQMWAGQFVQNGPRRWMTSGGLGTMGYGLPAAVGVKVAHPHDTVTCISGDGSFQMNMQELGTIAQYGIGVKVIILNNGWLGMVRQWQHMFYNDRYEATNLEDGTPEFARLADVYGLEAMNVRQRKIYQRRLPKALSHKGPMILDVRVTRDEDCYPMVAPGHDNSDMMGLSS</sequence>
<evidence type="ECO:0000250" key="1"/>
<evidence type="ECO:0000305" key="2"/>
<keyword id="KW-0028">Amino-acid biosynthesis</keyword>
<keyword id="KW-0100">Branched-chain amino acid biosynthesis</keyword>
<keyword id="KW-0274">FAD</keyword>
<keyword id="KW-0285">Flavoprotein</keyword>
<keyword id="KW-0460">Magnesium</keyword>
<keyword id="KW-0479">Metal-binding</keyword>
<keyword id="KW-0786">Thiamine pyrophosphate</keyword>
<keyword id="KW-0808">Transferase</keyword>